<dbReference type="EMBL" id="AB002334">
    <property type="protein sequence ID" value="BAA20794.2"/>
    <property type="status" value="ALT_SEQ"/>
    <property type="molecule type" value="mRNA"/>
</dbReference>
<dbReference type="EMBL" id="AC012487">
    <property type="protein sequence ID" value="AAX88838.1"/>
    <property type="status" value="ALT_SEQ"/>
    <property type="molecule type" value="Genomic_DNA"/>
</dbReference>
<dbReference type="EMBL" id="AC068941">
    <property type="status" value="NOT_ANNOTATED_CDS"/>
    <property type="molecule type" value="Genomic_DNA"/>
</dbReference>
<dbReference type="EMBL" id="CH471182">
    <property type="protein sequence ID" value="EAW53882.1"/>
    <property type="status" value="ALT_SEQ"/>
    <property type="molecule type" value="Genomic_DNA"/>
</dbReference>
<dbReference type="EMBL" id="BC037774">
    <property type="protein sequence ID" value="AAH37774.1"/>
    <property type="status" value="ALT_SEQ"/>
    <property type="molecule type" value="mRNA"/>
</dbReference>
<dbReference type="EMBL" id="BC146789">
    <property type="protein sequence ID" value="AAI46790.1"/>
    <property type="status" value="ALT_SEQ"/>
    <property type="molecule type" value="mRNA"/>
</dbReference>
<dbReference type="EMBL" id="AF432211">
    <property type="protein sequence ID" value="AAL99918.1"/>
    <property type="status" value="ALT_INIT"/>
    <property type="molecule type" value="mRNA"/>
</dbReference>
<dbReference type="EMBL" id="AF273042">
    <property type="protein sequence ID" value="AAG34902.1"/>
    <property type="status" value="ALT_FRAME"/>
    <property type="molecule type" value="mRNA"/>
</dbReference>
<dbReference type="CCDS" id="CCDS33268.1">
    <molecule id="Q8IWJ2-1"/>
</dbReference>
<dbReference type="RefSeq" id="NP_852118.2">
    <molecule id="Q8IWJ2-1"/>
    <property type="nucleotide sequence ID" value="NM_181453.4"/>
</dbReference>
<dbReference type="RefSeq" id="XP_006712934.1">
    <property type="nucleotide sequence ID" value="XM_006712871.1"/>
</dbReference>
<dbReference type="PDB" id="3BBP">
    <property type="method" value="X-ray"/>
    <property type="resolution" value="3.00 A"/>
    <property type="chains" value="D/E/F=1547-1612"/>
</dbReference>
<dbReference type="PDBsum" id="3BBP"/>
<dbReference type="SMR" id="Q8IWJ2"/>
<dbReference type="BioGRID" id="115006">
    <property type="interactions" value="139"/>
</dbReference>
<dbReference type="FunCoup" id="Q8IWJ2">
    <property type="interactions" value="2813"/>
</dbReference>
<dbReference type="IntAct" id="Q8IWJ2">
    <property type="interactions" value="63"/>
</dbReference>
<dbReference type="STRING" id="9606.ENSP00000307939"/>
<dbReference type="GlyGen" id="Q8IWJ2">
    <property type="glycosylation" value="2 sites, 1 O-linked glycan (1 site)"/>
</dbReference>
<dbReference type="iPTMnet" id="Q8IWJ2"/>
<dbReference type="MetOSite" id="Q8IWJ2"/>
<dbReference type="PhosphoSitePlus" id="Q8IWJ2"/>
<dbReference type="BioMuta" id="GCC2"/>
<dbReference type="DMDM" id="313104307"/>
<dbReference type="jPOST" id="Q8IWJ2"/>
<dbReference type="MassIVE" id="Q8IWJ2"/>
<dbReference type="PaxDb" id="9606-ENSP00000307939"/>
<dbReference type="PeptideAtlas" id="Q8IWJ2"/>
<dbReference type="ProteomicsDB" id="70862">
    <molecule id="Q8IWJ2-1"/>
</dbReference>
<dbReference type="ProteomicsDB" id="70863">
    <molecule id="Q8IWJ2-3"/>
</dbReference>
<dbReference type="Pumba" id="Q8IWJ2"/>
<dbReference type="Antibodypedia" id="33069">
    <property type="antibodies" value="178 antibodies from 30 providers"/>
</dbReference>
<dbReference type="DNASU" id="9648"/>
<dbReference type="Ensembl" id="ENST00000309863.11">
    <molecule id="Q8IWJ2-1"/>
    <property type="protein sequence ID" value="ENSP00000307939.5"/>
    <property type="gene ID" value="ENSG00000135968.22"/>
</dbReference>
<dbReference type="Ensembl" id="ENST00000482325.5">
    <molecule id="Q8IWJ2-3"/>
    <property type="protein sequence ID" value="ENSP00000419969.1"/>
    <property type="gene ID" value="ENSG00000135968.22"/>
</dbReference>
<dbReference type="GeneID" id="9648"/>
<dbReference type="KEGG" id="hsa:9648"/>
<dbReference type="MANE-Select" id="ENST00000309863.11">
    <property type="protein sequence ID" value="ENSP00000307939.5"/>
    <property type="RefSeq nucleotide sequence ID" value="NM_181453.4"/>
    <property type="RefSeq protein sequence ID" value="NP_852118.2"/>
</dbReference>
<dbReference type="UCSC" id="uc002tec.4">
    <molecule id="Q8IWJ2-1"/>
    <property type="organism name" value="human"/>
</dbReference>
<dbReference type="AGR" id="HGNC:23218"/>
<dbReference type="CTD" id="9648"/>
<dbReference type="DisGeNET" id="9648"/>
<dbReference type="GeneCards" id="GCC2"/>
<dbReference type="HGNC" id="HGNC:23218">
    <property type="gene designation" value="GCC2"/>
</dbReference>
<dbReference type="HPA" id="ENSG00000135968">
    <property type="expression patterns" value="Low tissue specificity"/>
</dbReference>
<dbReference type="MIM" id="612711">
    <property type="type" value="gene"/>
</dbReference>
<dbReference type="neXtProt" id="NX_Q8IWJ2"/>
<dbReference type="OpenTargets" id="ENSG00000135968"/>
<dbReference type="PharmGKB" id="PA134876902"/>
<dbReference type="VEuPathDB" id="HostDB:ENSG00000135968"/>
<dbReference type="eggNOG" id="KOG0864">
    <property type="taxonomic scope" value="Eukaryota"/>
</dbReference>
<dbReference type="GeneTree" id="ENSGT00950000183078"/>
<dbReference type="HOGENOM" id="CLU_002922_0_0_1"/>
<dbReference type="InParanoid" id="Q8IWJ2"/>
<dbReference type="OMA" id="TEANHFE"/>
<dbReference type="OrthoDB" id="1926336at2759"/>
<dbReference type="PAN-GO" id="Q8IWJ2">
    <property type="GO annotations" value="2 GO annotations based on evolutionary models"/>
</dbReference>
<dbReference type="PhylomeDB" id="Q8IWJ2"/>
<dbReference type="TreeFam" id="TF332907"/>
<dbReference type="PathwayCommons" id="Q8IWJ2"/>
<dbReference type="Reactome" id="R-HSA-6811440">
    <property type="pathway name" value="Retrograde transport at the Trans-Golgi-Network"/>
</dbReference>
<dbReference type="Reactome" id="R-HSA-9725370">
    <property type="pathway name" value="Signaling by ALK fusions and activated point mutants"/>
</dbReference>
<dbReference type="SignaLink" id="Q8IWJ2"/>
<dbReference type="SIGNOR" id="Q8IWJ2"/>
<dbReference type="BioGRID-ORCS" id="9648">
    <property type="hits" value="13 hits in 1171 CRISPR screens"/>
</dbReference>
<dbReference type="CD-CODE" id="F3208D05">
    <property type="entry name" value="Golgin condensate"/>
</dbReference>
<dbReference type="ChiTaRS" id="GCC2">
    <property type="organism name" value="human"/>
</dbReference>
<dbReference type="EvolutionaryTrace" id="Q8IWJ2"/>
<dbReference type="GeneWiki" id="GCC2"/>
<dbReference type="GenomeRNAi" id="9648"/>
<dbReference type="Pharos" id="Q8IWJ2">
    <property type="development level" value="Tbio"/>
</dbReference>
<dbReference type="PRO" id="PR:Q8IWJ2"/>
<dbReference type="Proteomes" id="UP000005640">
    <property type="component" value="Chromosome 2"/>
</dbReference>
<dbReference type="RNAct" id="Q8IWJ2">
    <property type="molecule type" value="protein"/>
</dbReference>
<dbReference type="Bgee" id="ENSG00000135968">
    <property type="expression patterns" value="Expressed in calcaneal tendon and 204 other cell types or tissues"/>
</dbReference>
<dbReference type="ExpressionAtlas" id="Q8IWJ2">
    <property type="expression patterns" value="baseline and differential"/>
</dbReference>
<dbReference type="GO" id="GO:0005829">
    <property type="term" value="C:cytosol"/>
    <property type="evidence" value="ECO:0000304"/>
    <property type="project" value="Reactome"/>
</dbReference>
<dbReference type="GO" id="GO:0005794">
    <property type="term" value="C:Golgi apparatus"/>
    <property type="evidence" value="ECO:0000314"/>
    <property type="project" value="HPA"/>
</dbReference>
<dbReference type="GO" id="GO:0016020">
    <property type="term" value="C:membrane"/>
    <property type="evidence" value="ECO:0007005"/>
    <property type="project" value="UniProtKB"/>
</dbReference>
<dbReference type="GO" id="GO:0005654">
    <property type="term" value="C:nucleoplasm"/>
    <property type="evidence" value="ECO:0000314"/>
    <property type="project" value="HPA"/>
</dbReference>
<dbReference type="GO" id="GO:0005802">
    <property type="term" value="C:trans-Golgi network"/>
    <property type="evidence" value="ECO:0000314"/>
    <property type="project" value="UniProtKB"/>
</dbReference>
<dbReference type="GO" id="GO:0042802">
    <property type="term" value="F:identical protein binding"/>
    <property type="evidence" value="ECO:0000353"/>
    <property type="project" value="IntAct"/>
</dbReference>
<dbReference type="GO" id="GO:0031267">
    <property type="term" value="F:small GTPase binding"/>
    <property type="evidence" value="ECO:0000250"/>
    <property type="project" value="FlyBase"/>
</dbReference>
<dbReference type="GO" id="GO:0090161">
    <property type="term" value="P:Golgi ribbon formation"/>
    <property type="evidence" value="ECO:0000315"/>
    <property type="project" value="UniProtKB"/>
</dbReference>
<dbReference type="GO" id="GO:0034499">
    <property type="term" value="P:late endosome to Golgi transport"/>
    <property type="evidence" value="ECO:0000315"/>
    <property type="project" value="UniProtKB"/>
</dbReference>
<dbReference type="GO" id="GO:0034453">
    <property type="term" value="P:microtubule anchoring"/>
    <property type="evidence" value="ECO:0000315"/>
    <property type="project" value="UniProtKB"/>
</dbReference>
<dbReference type="GO" id="GO:0031023">
    <property type="term" value="P:microtubule organizing center organization"/>
    <property type="evidence" value="ECO:0000315"/>
    <property type="project" value="UniProtKB"/>
</dbReference>
<dbReference type="GO" id="GO:0034067">
    <property type="term" value="P:protein localization to Golgi apparatus"/>
    <property type="evidence" value="ECO:0000315"/>
    <property type="project" value="UniProtKB"/>
</dbReference>
<dbReference type="GO" id="GO:0006622">
    <property type="term" value="P:protein targeting to lysosome"/>
    <property type="evidence" value="ECO:0000315"/>
    <property type="project" value="UniProtKB"/>
</dbReference>
<dbReference type="GO" id="GO:0071955">
    <property type="term" value="P:recycling endosome to Golgi transport"/>
    <property type="evidence" value="ECO:0000315"/>
    <property type="project" value="UniProtKB"/>
</dbReference>
<dbReference type="GO" id="GO:0070861">
    <property type="term" value="P:regulation of protein exit from endoplasmic reticulum"/>
    <property type="evidence" value="ECO:0000315"/>
    <property type="project" value="UniProtKB"/>
</dbReference>
<dbReference type="GO" id="GO:0042147">
    <property type="term" value="P:retrograde transport, endosome to Golgi"/>
    <property type="evidence" value="ECO:0000315"/>
    <property type="project" value="UniProtKB"/>
</dbReference>
<dbReference type="DisProt" id="DP02732"/>
<dbReference type="FunFam" id="1.10.220.60:FF:000003">
    <property type="entry name" value="GRIP and coiled-coil domain-containing protein 2"/>
    <property type="match status" value="1"/>
</dbReference>
<dbReference type="Gene3D" id="1.10.220.60">
    <property type="entry name" value="GRIP domain"/>
    <property type="match status" value="1"/>
</dbReference>
<dbReference type="InterPro" id="IPR032023">
    <property type="entry name" value="GCC2_Rab_bind"/>
</dbReference>
<dbReference type="InterPro" id="IPR000237">
    <property type="entry name" value="GRIP_dom"/>
</dbReference>
<dbReference type="InterPro" id="IPR051841">
    <property type="entry name" value="MT-Golgi_org_protein"/>
</dbReference>
<dbReference type="PANTHER" id="PTHR18902:SF25">
    <property type="entry name" value="GRIP AND COILED-COIL DOMAIN-CONTAINING PROTEIN 2"/>
    <property type="match status" value="1"/>
</dbReference>
<dbReference type="PANTHER" id="PTHR18902">
    <property type="entry name" value="NUCLEAR MITOTIC APPARATUS PROTEIN 1-RELATED"/>
    <property type="match status" value="1"/>
</dbReference>
<dbReference type="Pfam" id="PF01465">
    <property type="entry name" value="GRIP"/>
    <property type="match status" value="1"/>
</dbReference>
<dbReference type="Pfam" id="PF16704">
    <property type="entry name" value="Rab_bind"/>
    <property type="match status" value="1"/>
</dbReference>
<dbReference type="SMART" id="SM00755">
    <property type="entry name" value="Grip"/>
    <property type="match status" value="1"/>
</dbReference>
<dbReference type="PROSITE" id="PS50913">
    <property type="entry name" value="GRIP"/>
    <property type="match status" value="1"/>
</dbReference>
<comment type="function">
    <text evidence="5 6 7">Golgin which probably tethers transport vesicles to the trans-Golgi network (TGN) and regulates vesicular transport between the endosomes and the Golgi. As a RAB9A effector it is involved in recycling of the mannose 6-phosphate receptor from the late endosomes to the TGN. May also play a role in transport between the recycling endosomes and the Golgi. Required for maintenance of the Golgi structure, it is involved in the biogenesis of noncentrosomal, Golgi-associated microtubules through recruitment of CLASP1 and CLASP2.</text>
</comment>
<comment type="subunit">
    <text evidence="5 7 8 9 10">Homodimer. Interacts (via GRIP domain) with RAB6A (preferentially in its GTP-bound form). May interact (RAB6A-dependent) with ARL1; according to PubMed:19703403, RAB6A and ARL1 are not involved in GCC2 Golgi localization as proposed by PubMed:18243103. Interacts (probably via GRIP domain) with RAB9A (preferentially in its GTP-bound form). Interacts with CLASP1 and CLASP2; recruits both proteins to membranes of the TGN. Interacts with STX16.</text>
</comment>
<comment type="interaction">
    <interactant intactId="EBI-1645320">
        <id>Q8IWJ2</id>
    </interactant>
    <interactant intactId="EBI-1645320">
        <id>Q8IWJ2</id>
        <label>GCC2</label>
    </interactant>
    <organismsDiffer>false</organismsDiffer>
    <experiments>2</experiments>
</comment>
<comment type="interaction">
    <interactant intactId="EBI-1645320">
        <id>Q8IWJ2</id>
    </interactant>
    <interactant intactId="EBI-1052826">
        <id>P20340</id>
        <label>RAB6A</label>
    </interactant>
    <organismsDiffer>false</organismsDiffer>
    <experiments>4</experiments>
</comment>
<comment type="subcellular location">
    <subcellularLocation>
        <location>Cytoplasm</location>
    </subcellularLocation>
    <subcellularLocation>
        <location>Golgi apparatus</location>
        <location>trans-Golgi network membrane</location>
        <topology>Peripheral membrane protein</topology>
    </subcellularLocation>
</comment>
<comment type="alternative products">
    <event type="alternative splicing"/>
    <isoform>
        <id>Q8IWJ2-1</id>
        <name>1</name>
        <sequence type="displayed"/>
    </isoform>
    <isoform>
        <id>Q8IWJ2-3</id>
        <name>2</name>
        <sequence type="described" ref="VSP_040106 VSP_040107"/>
    </isoform>
</comment>
<comment type="tissue specificity">
    <text evidence="4">Ubiquitous.</text>
</comment>
<comment type="domain">
    <text>Extended rod-like protein with coiled-coil domains.</text>
</comment>
<comment type="miscellaneous">
    <molecule>Isoform 2</molecule>
    <text evidence="14">May be produced at very low levels due to a premature stop codon in the mRNA, leading to nonsense-mediated mRNA decay.</text>
</comment>
<comment type="sequence caution" evidence="14">
    <conflict type="frameshift">
        <sequence resource="EMBL-CDS" id="AAG34902"/>
    </conflict>
</comment>
<comment type="sequence caution" evidence="14">
    <conflict type="miscellaneous discrepancy">
        <sequence resource="EMBL-CDS" id="AAH37774"/>
    </conflict>
    <text>Wrong choice of CDS.</text>
</comment>
<comment type="sequence caution" evidence="14">
    <conflict type="miscellaneous discrepancy">
        <sequence resource="EMBL-CDS" id="AAI46790"/>
    </conflict>
    <text>Wrong choice of CDS.</text>
</comment>
<comment type="sequence caution" evidence="14">
    <conflict type="erroneous initiation">
        <sequence resource="EMBL-CDS" id="AAL99918"/>
    </conflict>
    <text>Extended N-terminus.</text>
</comment>
<comment type="sequence caution" evidence="14">
    <conflict type="erroneous gene model prediction">
        <sequence resource="EMBL-CDS" id="AAX88838"/>
    </conflict>
</comment>
<comment type="sequence caution" evidence="14">
    <conflict type="miscellaneous discrepancy">
        <sequence resource="EMBL-CDS" id="BAA20794"/>
    </conflict>
    <text>Wrong choice of CDS.</text>
</comment>
<comment type="sequence caution" evidence="14">
    <conflict type="erroneous gene model prediction">
        <sequence resource="EMBL-CDS" id="EAW53882"/>
    </conflict>
</comment>
<organism>
    <name type="scientific">Homo sapiens</name>
    <name type="common">Human</name>
    <dbReference type="NCBI Taxonomy" id="9606"/>
    <lineage>
        <taxon>Eukaryota</taxon>
        <taxon>Metazoa</taxon>
        <taxon>Chordata</taxon>
        <taxon>Craniata</taxon>
        <taxon>Vertebrata</taxon>
        <taxon>Euteleostomi</taxon>
        <taxon>Mammalia</taxon>
        <taxon>Eutheria</taxon>
        <taxon>Euarchontoglires</taxon>
        <taxon>Primates</taxon>
        <taxon>Haplorrhini</taxon>
        <taxon>Catarrhini</taxon>
        <taxon>Hominidae</taxon>
        <taxon>Homo</taxon>
    </lineage>
</organism>
<feature type="chain" id="PRO_0000190074" description="GRIP and coiled-coil domain-containing protein 2">
    <location>
        <begin position="1"/>
        <end position="1684"/>
    </location>
</feature>
<feature type="domain" description="GRIP" evidence="2">
    <location>
        <begin position="1609"/>
        <end position="1659"/>
    </location>
</feature>
<feature type="region of interest" description="Disordered" evidence="3">
    <location>
        <begin position="1"/>
        <end position="22"/>
    </location>
</feature>
<feature type="region of interest" description="Disordered" evidence="3">
    <location>
        <begin position="1475"/>
        <end position="1502"/>
    </location>
</feature>
<feature type="region of interest" description="Mediates interaction with RAB9A">
    <location>
        <begin position="1574"/>
        <end position="1684"/>
    </location>
</feature>
<feature type="region of interest" description="Mediates interaction with RAB6A">
    <location>
        <begin position="1574"/>
        <end position="1613"/>
    </location>
</feature>
<feature type="coiled-coil region" evidence="1">
    <location>
        <begin position="110"/>
        <end position="1618"/>
    </location>
</feature>
<feature type="compositionally biased region" description="Polar residues" evidence="3">
    <location>
        <begin position="1477"/>
        <end position="1492"/>
    </location>
</feature>
<feature type="modified residue" description="N-acetylmethionine" evidence="17">
    <location>
        <position position="1"/>
    </location>
</feature>
<feature type="modified residue" description="Phosphoserine" evidence="17">
    <location>
        <position position="11"/>
    </location>
</feature>
<feature type="modified residue" description="Phosphothreonine" evidence="17">
    <location>
        <position position="14"/>
    </location>
</feature>
<feature type="modified residue" description="Phosphoserine" evidence="18">
    <location>
        <position position="236"/>
    </location>
</feature>
<feature type="modified residue" description="Phosphoserine" evidence="15 16 19">
    <location>
        <position position="1483"/>
    </location>
</feature>
<feature type="modified residue" description="Phosphoserine" evidence="19">
    <location>
        <position position="1487"/>
    </location>
</feature>
<feature type="splice variant" id="VSP_040106" description="In isoform 2." evidence="12 13">
    <original>LETLPKEDLIKFAKKQMMLIQKAK</original>
    <variation>NWRKKLKNSDQNLLLKELVILLRH</variation>
    <location>
        <begin position="22"/>
        <end position="45"/>
    </location>
</feature>
<feature type="splice variant" id="VSP_040107" description="In isoform 2." evidence="12 13">
    <location>
        <begin position="46"/>
        <end position="1684"/>
    </location>
</feature>
<feature type="sequence variant" id="VAR_046635" description="In dbSNP:rs2718698." evidence="11">
    <original>Q</original>
    <variation>E</variation>
    <location>
        <position position="1134"/>
    </location>
</feature>
<feature type="sequence variant" id="VAR_016101" description="In dbSNP:rs1061202.">
    <original>R</original>
    <variation>G</variation>
    <location>
        <position position="1298"/>
    </location>
</feature>
<feature type="mutagenesis site" description="Slightly decreases RAB6A binding affinity. Decreases RAB9A binding affinity by 2-fold. Strongly decreases RAB6A or RAB9A binding affinity and abolishes Golgi localization; when associated with A-1595." evidence="9">
    <original>I</original>
    <variation>A</variation>
    <location>
        <position position="1588"/>
    </location>
</feature>
<feature type="mutagenesis site" description="Decreases RAB6A binding affinity by 2-fold. Strongly decreases RAB9A binding affinity. Strongly decreases RAB6A or RAB9A binding affinity and abolishes Golgi localization; when associated with A-1588." evidence="9">
    <original>L</original>
    <variation>A</variation>
    <location>
        <position position="1595"/>
    </location>
</feature>
<feature type="mutagenesis site" description="No effect on interaction with RAB6A and RAB9A." evidence="5 9">
    <original>Y</original>
    <variation>A</variation>
    <location>
        <position position="1618"/>
    </location>
</feature>
<feature type="helix" evidence="20">
    <location>
        <begin position="1574"/>
        <end position="1605"/>
    </location>
</feature>
<sequence length="1684" mass="195910">MEDLVQDGVASPATPGTGKSKLETLPKEDLIKFAKKQMMLIQKAKSRCTELEKEIEELRSKPVTEGTGDIIKALTERLDALLLEKAETEQQCLSLKKENIKMKQEVEDSVTKMGDAHKELEQSHINYVKEIENLKNELMAVRSKYSEDKANLQKQLEEAMNTQLELSEQLKFQNNSEDNVKKLQEEIEKIRPGFEEQILYLQKQLDATTDEKKETVTQLQNIIEANSQHYQKNINSLQEELLQLKAIHQEEVKELMCQIEASAKEHEAEINKLNELKENLVKQCEASEKNIQKKYECELENLRKATSNANQDNQICSILLQENTFVEQVVNEKVKHLEDTLKELESQHSILKDEVTYMNNLKLKLEMDAQHIKDEFFHEREDLEFKINELLLAKEEQGCVIEKLKSELAGLNKQFCYTVEQHNREVQSLKEQHQKEISELNETFLSDSEKEKLTLMFEIQGLKEQCENLQQEKQEAILNYESLREIMEILQTELGESAGKISQEFESMKQQQASDVHELQQKLRTAFTEKDALLETVNRLQGENEKLLSQQELVPELENTIKNLQEKNGVYLLSLSQRDTMLKELEGKINSLTEEKDDFINKLKNSHEEMDNFHKKCEREERLILELGKKVEQTIQYNSELEQKVNELTGGLEETLKEKDQNDQKLEKLMVQMKVLSEDKEVLSAEVKSLYEENNKLSSEKKQLSRDLEVFLSQKEDVILKEHITQLEKKLQLMVEEQDNLNKLLENEQVQKLFVKTQLYGFLKEMGSEVSEDSEEKDVVNVLQAVGESLAKINEEKCNLAFQRDEKVLELEKEIKCLQEESVVQCEELKSLLRDYEQEKVLLRKELEEIQSEKEALQSDLLEMKNANEKTRLENQNLLIQVEEVSQTCSKSEIHNEKEKCFIKEHENLKPLLEQKELRDRRAELILLKDSLAKSPSVKNDPLSSVKELEEKIENLEKECKEKEEKINKIKLVAVKAKKELDSSRKETQTVKEELESLRSEKDQLSASMRDLIQGAESYKNLLLEYEKQSEQLDVEKERANNFEHRIEDLTRQLRNSTLQCETINSDNEDLLARIETLQSNAKLLEVQILEVQRAKAMVDKELEAEKLQKEQKIKEHATTVNELEELQVQLQKQKKQLQKTMQELELVKKDAQQTTLMNMEIADYERLMKELNQKLTNKNNKIEDLEQEIKIQKQKQETLQEEITSLQSSVQQYEEKNTKIKQLLVKTKKELADSKQAETDHLILQASLKGELEASQQQVEVYKIQLAEITSEKHKIHEHLKTSAEQHQRTLSAYQQRVTALQEECRAAKAEQATVTSEFESYKVRVHNVLKQQKNKSMSQAETEGAKQEREHLEMLIDQLKIKLQDSQNNLQINVSELQTLQSEHDTLLERHNKMLQETVSKEAELREKLCSIQSENMMMKSEHTQTVSQLTSQNEVLRNSFRDQVRHLQEEHRKTVETLQQQLSKMEAQLFQLKNEPTTRSPVSSQQSLKNLRERRNTDLPLLDMHTVTREEGEGMETTDTESVSSASTYTQSLEQLLNSPETKLEPPLWHAEFTKEELVQKLSSTTKSADHLNGLLRETEATNAILMEQIKLLKSEIRRLERNQEREKSAANLEYLKNVLLQFIFLKPGSERERLLPVINTMLQLSPEEKGKLAAVAQGEEENASRSSGWASYLHSWSGLR</sequence>
<keyword id="KW-0002">3D-structure</keyword>
<keyword id="KW-0007">Acetylation</keyword>
<keyword id="KW-0025">Alternative splicing</keyword>
<keyword id="KW-0175">Coiled coil</keyword>
<keyword id="KW-0963">Cytoplasm</keyword>
<keyword id="KW-0333">Golgi apparatus</keyword>
<keyword id="KW-0472">Membrane</keyword>
<keyword id="KW-0597">Phosphoprotein</keyword>
<keyword id="KW-0653">Protein transport</keyword>
<keyword id="KW-1267">Proteomics identification</keyword>
<keyword id="KW-1185">Reference proteome</keyword>
<keyword id="KW-0813">Transport</keyword>
<evidence type="ECO:0000255" key="1"/>
<evidence type="ECO:0000255" key="2">
    <source>
        <dbReference type="PROSITE-ProRule" id="PRU00250"/>
    </source>
</evidence>
<evidence type="ECO:0000256" key="3">
    <source>
        <dbReference type="SAM" id="MobiDB-lite"/>
    </source>
</evidence>
<evidence type="ECO:0000269" key="4">
    <source>
    </source>
</evidence>
<evidence type="ECO:0000269" key="5">
    <source>
    </source>
</evidence>
<evidence type="ECO:0000269" key="6">
    <source>
    </source>
</evidence>
<evidence type="ECO:0000269" key="7">
    <source>
    </source>
</evidence>
<evidence type="ECO:0000269" key="8">
    <source>
    </source>
</evidence>
<evidence type="ECO:0000269" key="9">
    <source>
    </source>
</evidence>
<evidence type="ECO:0000269" key="10">
    <source>
    </source>
</evidence>
<evidence type="ECO:0000269" key="11">
    <source ref="3"/>
</evidence>
<evidence type="ECO:0000303" key="12">
    <source>
    </source>
</evidence>
<evidence type="ECO:0000303" key="13">
    <source>
    </source>
</evidence>
<evidence type="ECO:0000305" key="14"/>
<evidence type="ECO:0007744" key="15">
    <source>
    </source>
</evidence>
<evidence type="ECO:0007744" key="16">
    <source>
    </source>
</evidence>
<evidence type="ECO:0007744" key="17">
    <source>
    </source>
</evidence>
<evidence type="ECO:0007744" key="18">
    <source>
    </source>
</evidence>
<evidence type="ECO:0007744" key="19">
    <source>
    </source>
</evidence>
<evidence type="ECO:0007829" key="20">
    <source>
        <dbReference type="PDB" id="3BBP"/>
    </source>
</evidence>
<protein>
    <recommendedName>
        <fullName>GRIP and coiled-coil domain-containing protein 2</fullName>
    </recommendedName>
    <alternativeName>
        <fullName>185 kDa Golgi coiled-coil protein</fullName>
        <shortName>GCC185</shortName>
    </alternativeName>
    <alternativeName>
        <fullName>CLL-associated antigen KW-11</fullName>
    </alternativeName>
    <alternativeName>
        <fullName>CTCL tumor antigen se1-1</fullName>
    </alternativeName>
    <alternativeName>
        <fullName>Ran-binding protein 2-like 4</fullName>
        <shortName>RanBP2L4</shortName>
    </alternativeName>
    <alternativeName>
        <fullName>Renal carcinoma antigen NY-REN-53</fullName>
    </alternativeName>
</protein>
<name>GCC2_HUMAN</name>
<gene>
    <name type="primary">GCC2</name>
    <name type="synonym">KIAA0336</name>
    <name type="synonym">RANBP2L4</name>
</gene>
<reference key="1">
    <citation type="journal article" date="1997" name="DNA Res.">
        <title>Prediction of the coding sequences of unidentified human genes. VII. The complete sequences of 100 new cDNA clones from brain which can code for large proteins in vitro.</title>
        <authorList>
            <person name="Nagase T."/>
            <person name="Ishikawa K."/>
            <person name="Nakajima D."/>
            <person name="Ohira M."/>
            <person name="Seki N."/>
            <person name="Miyajima N."/>
            <person name="Tanaka A."/>
            <person name="Kotani H."/>
            <person name="Nomura N."/>
            <person name="Ohara O."/>
        </authorList>
    </citation>
    <scope>NUCLEOTIDE SEQUENCE [LARGE SCALE MRNA] (ISOFORM 2)</scope>
    <source>
        <tissue>Brain</tissue>
    </source>
</reference>
<reference key="2">
    <citation type="journal article" date="2005" name="Nature">
        <title>Generation and annotation of the DNA sequences of human chromosomes 2 and 4.</title>
        <authorList>
            <person name="Hillier L.W."/>
            <person name="Graves T.A."/>
            <person name="Fulton R.S."/>
            <person name="Fulton L.A."/>
            <person name="Pepin K.H."/>
            <person name="Minx P."/>
            <person name="Wagner-McPherson C."/>
            <person name="Layman D."/>
            <person name="Wylie K."/>
            <person name="Sekhon M."/>
            <person name="Becker M.C."/>
            <person name="Fewell G.A."/>
            <person name="Delehaunty K.D."/>
            <person name="Miner T.L."/>
            <person name="Nash W.E."/>
            <person name="Kremitzki C."/>
            <person name="Oddy L."/>
            <person name="Du H."/>
            <person name="Sun H."/>
            <person name="Bradshaw-Cordum H."/>
            <person name="Ali J."/>
            <person name="Carter J."/>
            <person name="Cordes M."/>
            <person name="Harris A."/>
            <person name="Isak A."/>
            <person name="van Brunt A."/>
            <person name="Nguyen C."/>
            <person name="Du F."/>
            <person name="Courtney L."/>
            <person name="Kalicki J."/>
            <person name="Ozersky P."/>
            <person name="Abbott S."/>
            <person name="Armstrong J."/>
            <person name="Belter E.A."/>
            <person name="Caruso L."/>
            <person name="Cedroni M."/>
            <person name="Cotton M."/>
            <person name="Davidson T."/>
            <person name="Desai A."/>
            <person name="Elliott G."/>
            <person name="Erb T."/>
            <person name="Fronick C."/>
            <person name="Gaige T."/>
            <person name="Haakenson W."/>
            <person name="Haglund K."/>
            <person name="Holmes A."/>
            <person name="Harkins R."/>
            <person name="Kim K."/>
            <person name="Kruchowski S.S."/>
            <person name="Strong C.M."/>
            <person name="Grewal N."/>
            <person name="Goyea E."/>
            <person name="Hou S."/>
            <person name="Levy A."/>
            <person name="Martinka S."/>
            <person name="Mead K."/>
            <person name="McLellan M.D."/>
            <person name="Meyer R."/>
            <person name="Randall-Maher J."/>
            <person name="Tomlinson C."/>
            <person name="Dauphin-Kohlberg S."/>
            <person name="Kozlowicz-Reilly A."/>
            <person name="Shah N."/>
            <person name="Swearengen-Shahid S."/>
            <person name="Snider J."/>
            <person name="Strong J.T."/>
            <person name="Thompson J."/>
            <person name="Yoakum M."/>
            <person name="Leonard S."/>
            <person name="Pearman C."/>
            <person name="Trani L."/>
            <person name="Radionenko M."/>
            <person name="Waligorski J.E."/>
            <person name="Wang C."/>
            <person name="Rock S.M."/>
            <person name="Tin-Wollam A.-M."/>
            <person name="Maupin R."/>
            <person name="Latreille P."/>
            <person name="Wendl M.C."/>
            <person name="Yang S.-P."/>
            <person name="Pohl C."/>
            <person name="Wallis J.W."/>
            <person name="Spieth J."/>
            <person name="Bieri T.A."/>
            <person name="Berkowicz N."/>
            <person name="Nelson J.O."/>
            <person name="Osborne J."/>
            <person name="Ding L."/>
            <person name="Meyer R."/>
            <person name="Sabo A."/>
            <person name="Shotland Y."/>
            <person name="Sinha P."/>
            <person name="Wohldmann P.E."/>
            <person name="Cook L.L."/>
            <person name="Hickenbotham M.T."/>
            <person name="Eldred J."/>
            <person name="Williams D."/>
            <person name="Jones T.A."/>
            <person name="She X."/>
            <person name="Ciccarelli F.D."/>
            <person name="Izaurralde E."/>
            <person name="Taylor J."/>
            <person name="Schmutz J."/>
            <person name="Myers R.M."/>
            <person name="Cox D.R."/>
            <person name="Huang X."/>
            <person name="McPherson J.D."/>
            <person name="Mardis E.R."/>
            <person name="Clifton S.W."/>
            <person name="Warren W.C."/>
            <person name="Chinwalla A.T."/>
            <person name="Eddy S.R."/>
            <person name="Marra M.A."/>
            <person name="Ovcharenko I."/>
            <person name="Furey T.S."/>
            <person name="Miller W."/>
            <person name="Eichler E.E."/>
            <person name="Bork P."/>
            <person name="Suyama M."/>
            <person name="Torrents D."/>
            <person name="Waterston R.H."/>
            <person name="Wilson R.K."/>
        </authorList>
    </citation>
    <scope>NUCLEOTIDE SEQUENCE [LARGE SCALE GENOMIC DNA]</scope>
</reference>
<reference key="3">
    <citation type="submission" date="2005-09" db="EMBL/GenBank/DDBJ databases">
        <authorList>
            <person name="Mural R.J."/>
            <person name="Istrail S."/>
            <person name="Sutton G.G."/>
            <person name="Florea L."/>
            <person name="Halpern A.L."/>
            <person name="Mobarry C.M."/>
            <person name="Lippert R."/>
            <person name="Walenz B."/>
            <person name="Shatkay H."/>
            <person name="Dew I."/>
            <person name="Miller J.R."/>
            <person name="Flanigan M.J."/>
            <person name="Edwards N.J."/>
            <person name="Bolanos R."/>
            <person name="Fasulo D."/>
            <person name="Halldorsson B.V."/>
            <person name="Hannenhalli S."/>
            <person name="Turner R."/>
            <person name="Yooseph S."/>
            <person name="Lu F."/>
            <person name="Nusskern D.R."/>
            <person name="Shue B.C."/>
            <person name="Zheng X.H."/>
            <person name="Zhong F."/>
            <person name="Delcher A.L."/>
            <person name="Huson D.H."/>
            <person name="Kravitz S.A."/>
            <person name="Mouchard L."/>
            <person name="Reinert K."/>
            <person name="Remington K.A."/>
            <person name="Clark A.G."/>
            <person name="Waterman M.S."/>
            <person name="Eichler E.E."/>
            <person name="Adams M.D."/>
            <person name="Hunkapiller M.W."/>
            <person name="Myers E.W."/>
            <person name="Venter J.C."/>
        </authorList>
    </citation>
    <scope>NUCLEOTIDE SEQUENCE [LARGE SCALE GENOMIC DNA]</scope>
    <scope>VARIANT GLU-1134</scope>
</reference>
<reference key="4">
    <citation type="journal article" date="2004" name="Genome Res.">
        <title>The status, quality, and expansion of the NIH full-length cDNA project: the Mammalian Gene Collection (MGC).</title>
        <authorList>
            <consortium name="The MGC Project Team"/>
        </authorList>
    </citation>
    <scope>NUCLEOTIDE SEQUENCE [LARGE SCALE MRNA] (ISOFORM 2)</scope>
    <source>
        <tissue>Brain</tissue>
    </source>
</reference>
<reference key="5">
    <citation type="journal article" date="2002" name="Blood">
        <title>Identification of tumor-associated antigens in chronic lymphocytic leukemia by SEREX.</title>
        <authorList>
            <person name="Krackhardt A.M."/>
            <person name="Witzens M."/>
            <person name="Harig S."/>
            <person name="Hodi F.S."/>
            <person name="Zauls A.J."/>
            <person name="Chessia M."/>
            <person name="Barrett P."/>
            <person name="Gribben J.G."/>
        </authorList>
    </citation>
    <scope>NUCLEOTIDE SEQUENCE [MRNA] OF 1-448 (ISOFORM 1)</scope>
</reference>
<reference key="6">
    <citation type="journal article" date="2001" name="Proc. Natl. Acad. Sci. U.S.A.">
        <title>Serological detection of cutaneous T-cell lymphoma-associated antigens.</title>
        <authorList>
            <person name="Eichmueller S."/>
            <person name="Usener D."/>
            <person name="Dummer R."/>
            <person name="Stein A."/>
            <person name="Thiel D."/>
            <person name="Schadendorf D."/>
        </authorList>
    </citation>
    <scope>NUCLEOTIDE SEQUENCE [MRNA] OF 161-946 (ISOFORM 1)</scope>
    <scope>TISSUE SPECIFICITY</scope>
    <source>
        <tissue>Testis</tissue>
    </source>
</reference>
<reference key="7">
    <citation type="journal article" date="1999" name="Int. J. Cancer">
        <title>Antigens recognized by autologous antibody in patients with renal-cell carcinoma.</title>
        <authorList>
            <person name="Scanlan M.J."/>
            <person name="Gordan J.D."/>
            <person name="Williamson B."/>
            <person name="Stockert E."/>
            <person name="Bander N.H."/>
            <person name="Jongeneel C.V."/>
            <person name="Gure A.O."/>
            <person name="Jaeger D."/>
            <person name="Jaeger E."/>
            <person name="Knuth A."/>
            <person name="Chen Y.-T."/>
            <person name="Old L.J."/>
        </authorList>
    </citation>
    <scope>IDENTIFICATION AS A RENAL CANCER ANTIGEN</scope>
    <source>
        <tissue>Renal cell carcinoma</tissue>
    </source>
</reference>
<reference key="8">
    <citation type="journal article" date="2003" name="J. Biol. Chem.">
        <title>GRIP domain-mediated targeting of two new coiled-coil proteins, GCC88 and GCC185, to subcompartments of the trans-Golgi network.</title>
        <authorList>
            <person name="Luke M.R."/>
            <person name="Kjer-Nielsen L."/>
            <person name="Brown D.L."/>
            <person name="Stow J.L."/>
            <person name="Gleeson P.A."/>
        </authorList>
    </citation>
    <scope>SUBCELLULAR LOCATION</scope>
</reference>
<reference key="9">
    <citation type="journal article" date="2006" name="Mol. Biol. Cell">
        <title>A functional role for the GCC185 golgin in mannose 6-phosphate receptor recycling.</title>
        <authorList>
            <person name="Reddy J.V."/>
            <person name="Burguete A.S."/>
            <person name="Sridevi K."/>
            <person name="Ganley I.G."/>
            <person name="Nottingham R.M."/>
            <person name="Pfeffer S.R."/>
        </authorList>
    </citation>
    <scope>FUNCTION</scope>
    <scope>SUBCELLULAR LOCATION</scope>
    <scope>INTERACTION WITH RAB9A</scope>
    <scope>MUTAGENESIS OF TYR-1618</scope>
</reference>
<reference key="10">
    <citation type="journal article" date="2006" name="Nat. Biotechnol.">
        <title>A probability-based approach for high-throughput protein phosphorylation analysis and site localization.</title>
        <authorList>
            <person name="Beausoleil S.A."/>
            <person name="Villen J."/>
            <person name="Gerber S.A."/>
            <person name="Rush J."/>
            <person name="Gygi S.P."/>
        </authorList>
    </citation>
    <scope>PHOSPHORYLATION [LARGE SCALE ANALYSIS] AT SER-1483</scope>
    <scope>IDENTIFICATION BY MASS SPECTROMETRY [LARGE SCALE ANALYSIS]</scope>
    <source>
        <tissue>Cervix carcinoma</tissue>
    </source>
</reference>
<reference key="11">
    <citation type="journal article" date="2007" name="Dev. Cell">
        <title>Asymmetric CLASP-dependent nucleation of noncentrosomal microtubules at the trans-Golgi network.</title>
        <authorList>
            <person name="Efimov A."/>
            <person name="Kharitonov A."/>
            <person name="Efimova N."/>
            <person name="Loncarek J."/>
            <person name="Miller P.M."/>
            <person name="Andreyeva N."/>
            <person name="Gleeson P."/>
            <person name="Galjart N."/>
            <person name="Maia A.R."/>
            <person name="McLeod I.X."/>
            <person name="Yates J.R. III"/>
            <person name="Maiato H."/>
            <person name="Khodjakov A."/>
            <person name="Akhmanova A."/>
            <person name="Kaverina I."/>
        </authorList>
    </citation>
    <scope>FUNCTION</scope>
    <scope>INTERACTION WITH CLASP1 AND CLASP2</scope>
</reference>
<reference key="12">
    <citation type="journal article" date="2007" name="Traffic">
        <title>The trans-Golgi network golgin, GCC185, is required for endosome-to-Golgi transport and maintenance of Golgi structure.</title>
        <authorList>
            <person name="Derby M.C."/>
            <person name="Lieu Z.Z."/>
            <person name="Brown D."/>
            <person name="Stow J.L."/>
            <person name="Goud B."/>
            <person name="Gleeson P.A."/>
        </authorList>
    </citation>
    <scope>FUNCTION</scope>
    <scope>SUBCELLULAR LOCATION</scope>
</reference>
<reference key="13">
    <citation type="journal article" date="2008" name="J. Cell Biol.">
        <title>A syntaxin 10-SNARE complex distinguishes two distinct transport routes from endosomes to the trans-Golgi in human cells.</title>
        <authorList>
            <person name="Ganley I.G."/>
            <person name="Espinosa E."/>
            <person name="Pfeffer S.R."/>
        </authorList>
    </citation>
    <scope>INTERACTION WITH STX16</scope>
</reference>
<reference key="14">
    <citation type="journal article" date="2008" name="Proc. Natl. Acad. Sci. U.S.A.">
        <title>A quantitative atlas of mitotic phosphorylation.</title>
        <authorList>
            <person name="Dephoure N."/>
            <person name="Zhou C."/>
            <person name="Villen J."/>
            <person name="Beausoleil S.A."/>
            <person name="Bakalarski C.E."/>
            <person name="Elledge S.J."/>
            <person name="Gygi S.P."/>
        </authorList>
    </citation>
    <scope>PHOSPHORYLATION [LARGE SCALE ANALYSIS] AT SER-1483</scope>
    <scope>IDENTIFICATION BY MASS SPECTROMETRY [LARGE SCALE ANALYSIS]</scope>
    <source>
        <tissue>Cervix carcinoma</tissue>
    </source>
</reference>
<reference key="15">
    <citation type="journal article" date="2009" name="Cell">
        <title>The localization of the Golgin GCC185 is independent of Rab6A/A' and Arl1.</title>
        <authorList>
            <person name="Houghton F.J."/>
            <person name="Chew P.L."/>
            <person name="Lodeho S."/>
            <person name="Goud B."/>
            <person name="Gleeson P.A."/>
        </authorList>
    </citation>
    <scope>INTERACTION WITH RAB6A</scope>
    <scope>SUBCELLULAR LOCATION</scope>
</reference>
<reference key="16">
    <citation type="journal article" date="2010" name="Sci. Signal.">
        <title>Quantitative phosphoproteomics reveals widespread full phosphorylation site occupancy during mitosis.</title>
        <authorList>
            <person name="Olsen J.V."/>
            <person name="Vermeulen M."/>
            <person name="Santamaria A."/>
            <person name="Kumar C."/>
            <person name="Miller M.L."/>
            <person name="Jensen L.J."/>
            <person name="Gnad F."/>
            <person name="Cox J."/>
            <person name="Jensen T.S."/>
            <person name="Nigg E.A."/>
            <person name="Brunak S."/>
            <person name="Mann M."/>
        </authorList>
    </citation>
    <scope>ACETYLATION [LARGE SCALE ANALYSIS] AT MET-1</scope>
    <scope>PHOSPHORYLATION [LARGE SCALE ANALYSIS] AT SER-11 AND THR-14</scope>
    <scope>IDENTIFICATION BY MASS SPECTROMETRY [LARGE SCALE ANALYSIS]</scope>
    <source>
        <tissue>Cervix carcinoma</tissue>
    </source>
</reference>
<reference key="17">
    <citation type="journal article" date="2011" name="BMC Syst. Biol.">
        <title>Initial characterization of the human central proteome.</title>
        <authorList>
            <person name="Burkard T.R."/>
            <person name="Planyavsky M."/>
            <person name="Kaupe I."/>
            <person name="Breitwieser F.P."/>
            <person name="Buerckstuemmer T."/>
            <person name="Bennett K.L."/>
            <person name="Superti-Furga G."/>
            <person name="Colinge J."/>
        </authorList>
    </citation>
    <scope>IDENTIFICATION BY MASS SPECTROMETRY [LARGE SCALE ANALYSIS]</scope>
</reference>
<reference key="18">
    <citation type="journal article" date="2011" name="Sci. Signal.">
        <title>System-wide temporal characterization of the proteome and phosphoproteome of human embryonic stem cell differentiation.</title>
        <authorList>
            <person name="Rigbolt K.T."/>
            <person name="Prokhorova T.A."/>
            <person name="Akimov V."/>
            <person name="Henningsen J."/>
            <person name="Johansen P.T."/>
            <person name="Kratchmarova I."/>
            <person name="Kassem M."/>
            <person name="Mann M."/>
            <person name="Olsen J.V."/>
            <person name="Blagoev B."/>
        </authorList>
    </citation>
    <scope>PHOSPHORYLATION [LARGE SCALE ANALYSIS] AT SER-236</scope>
    <scope>IDENTIFICATION BY MASS SPECTROMETRY [LARGE SCALE ANALYSIS]</scope>
</reference>
<reference key="19">
    <citation type="journal article" date="2013" name="J. Proteome Res.">
        <title>Toward a comprehensive characterization of a human cancer cell phosphoproteome.</title>
        <authorList>
            <person name="Zhou H."/>
            <person name="Di Palma S."/>
            <person name="Preisinger C."/>
            <person name="Peng M."/>
            <person name="Polat A.N."/>
            <person name="Heck A.J."/>
            <person name="Mohammed S."/>
        </authorList>
    </citation>
    <scope>PHOSPHORYLATION [LARGE SCALE ANALYSIS] AT SER-1483 AND SER-1487</scope>
    <scope>IDENTIFICATION BY MASS SPECTROMETRY [LARGE SCALE ANALYSIS]</scope>
    <source>
        <tissue>Cervix carcinoma</tissue>
        <tissue>Erythroleukemia</tissue>
    </source>
</reference>
<reference key="20">
    <citation type="journal article" date="2008" name="Cell">
        <title>Rab and Arl GTPase family members cooperate in the localization of the golgin GCC185.</title>
        <authorList>
            <person name="Burguete A.S."/>
            <person name="Fenn T.D."/>
            <person name="Brunger A.T."/>
            <person name="Pfeffer S.R."/>
        </authorList>
    </citation>
    <scope>X-RAY CRYSTALLOGRAPHY (3.0 ANGSTROMS) OF 1557-1612</scope>
    <scope>SUBCELLULAR LOCATION</scope>
    <scope>INTERACTION WITH ARL1; RAB6A AND RAB9A</scope>
    <scope>MUTAGENESIS OF ILE-1588; LEU-1595 AND TYR-1618</scope>
</reference>
<proteinExistence type="evidence at protein level"/>
<accession>Q8IWJ2</accession>
<accession>A6H8X8</accession>
<accession>O15045</accession>
<accession>Q4ZG46</accession>
<accession>Q8TDH3</accession>
<accession>Q9H2G8</accession>